<reference key="1">
    <citation type="journal article" date="1993" name="Plant Mol. Biol.">
        <title>Abundance of an mRNA encoding a high mobility group DNA-binding protein is regulated by light and an endogenous rhythm.</title>
        <authorList>
            <person name="Zheng C.C."/>
            <person name="Bui A.Q."/>
            <person name="O'Neill S.D."/>
        </authorList>
    </citation>
    <scope>NUCLEOTIDE SEQUENCE [MRNA]</scope>
    <source>
        <tissue>Cotyledon</tissue>
    </source>
</reference>
<organism>
    <name type="scientific">Ipomoea nil</name>
    <name type="common">Japanese morning glory</name>
    <name type="synonym">Pharbitis nil</name>
    <dbReference type="NCBI Taxonomy" id="35883"/>
    <lineage>
        <taxon>Eukaryota</taxon>
        <taxon>Viridiplantae</taxon>
        <taxon>Streptophyta</taxon>
        <taxon>Embryophyta</taxon>
        <taxon>Tracheophyta</taxon>
        <taxon>Spermatophyta</taxon>
        <taxon>Magnoliopsida</taxon>
        <taxon>eudicotyledons</taxon>
        <taxon>Gunneridae</taxon>
        <taxon>Pentapetalae</taxon>
        <taxon>asterids</taxon>
        <taxon>lamiids</taxon>
        <taxon>Solanales</taxon>
        <taxon>Convolvulaceae</taxon>
        <taxon>Ipomoeeae</taxon>
        <taxon>Ipomoea</taxon>
    </lineage>
</organism>
<protein>
    <recommendedName>
        <fullName>HMG1/2-like protein</fullName>
    </recommendedName>
</protein>
<name>HMGL_IPONI</name>
<accession>P40619</accession>
<feature type="chain" id="PRO_0000048555" description="HMG1/2-like protein">
    <location>
        <begin position="1"/>
        <end position="144"/>
    </location>
</feature>
<feature type="DNA-binding region" description="HMG box" evidence="1">
    <location>
        <begin position="36"/>
        <end position="105"/>
    </location>
</feature>
<feature type="region of interest" description="Disordered" evidence="2">
    <location>
        <begin position="1"/>
        <end position="42"/>
    </location>
</feature>
<feature type="region of interest" description="Disordered" evidence="2">
    <location>
        <begin position="85"/>
        <end position="144"/>
    </location>
</feature>
<feature type="compositionally biased region" description="Basic and acidic residues" evidence="2">
    <location>
        <begin position="8"/>
        <end position="35"/>
    </location>
</feature>
<feature type="compositionally biased region" description="Basic and acidic residues" evidence="2">
    <location>
        <begin position="89"/>
        <end position="99"/>
    </location>
</feature>
<feature type="compositionally biased region" description="Acidic residues" evidence="2">
    <location>
        <begin position="126"/>
        <end position="144"/>
    </location>
</feature>
<proteinExistence type="evidence at transcript level"/>
<evidence type="ECO:0000255" key="1">
    <source>
        <dbReference type="PROSITE-ProRule" id="PRU00267"/>
    </source>
</evidence>
<evidence type="ECO:0000256" key="2">
    <source>
        <dbReference type="SAM" id="MobiDB-lite"/>
    </source>
</evidence>
<evidence type="ECO:0000305" key="3"/>
<comment type="subcellular location">
    <subcellularLocation>
        <location evidence="1">Nucleus</location>
    </subcellularLocation>
</comment>
<comment type="tissue specificity">
    <text>Expressed at higher levels in dark-grown tissues, such as roots; and at lower levels in light-grown tissues, such as cotyledons and stems.</text>
</comment>
<comment type="induction">
    <text>Regulated by darkness and by a circadian rhythm.</text>
</comment>
<comment type="similarity">
    <text evidence="3">Belongs to the HMGB family.</text>
</comment>
<dbReference type="EMBL" id="L12169">
    <property type="status" value="NOT_ANNOTATED_CDS"/>
    <property type="molecule type" value="mRNA"/>
</dbReference>
<dbReference type="PIR" id="S40302">
    <property type="entry name" value="S40302"/>
</dbReference>
<dbReference type="RefSeq" id="NP_001412985.1">
    <property type="nucleotide sequence ID" value="NM_001426056.1"/>
</dbReference>
<dbReference type="RefSeq" id="XP_019182556.1">
    <property type="nucleotide sequence ID" value="XM_019327011.1"/>
</dbReference>
<dbReference type="SMR" id="P40619"/>
<dbReference type="GeneID" id="109177607"/>
<dbReference type="KEGG" id="ini:109177607"/>
<dbReference type="OrthoDB" id="1919336at2759"/>
<dbReference type="GO" id="GO:0000785">
    <property type="term" value="C:chromatin"/>
    <property type="evidence" value="ECO:0007669"/>
    <property type="project" value="UniProtKB-ARBA"/>
</dbReference>
<dbReference type="GO" id="GO:0005634">
    <property type="term" value="C:nucleus"/>
    <property type="evidence" value="ECO:0007669"/>
    <property type="project" value="UniProtKB-SubCell"/>
</dbReference>
<dbReference type="GO" id="GO:0003682">
    <property type="term" value="F:chromatin binding"/>
    <property type="evidence" value="ECO:0007669"/>
    <property type="project" value="UniProtKB-ARBA"/>
</dbReference>
<dbReference type="GO" id="GO:0003677">
    <property type="term" value="F:DNA binding"/>
    <property type="evidence" value="ECO:0007669"/>
    <property type="project" value="UniProtKB-KW"/>
</dbReference>
<dbReference type="GO" id="GO:0030527">
    <property type="term" value="F:structural constituent of chromatin"/>
    <property type="evidence" value="ECO:0007669"/>
    <property type="project" value="UniProtKB-ARBA"/>
</dbReference>
<dbReference type="GO" id="GO:0006325">
    <property type="term" value="P:chromatin organization"/>
    <property type="evidence" value="ECO:0007669"/>
    <property type="project" value="UniProtKB-ARBA"/>
</dbReference>
<dbReference type="CDD" id="cd22005">
    <property type="entry name" value="HMG-box_AtHMGB1-like"/>
    <property type="match status" value="1"/>
</dbReference>
<dbReference type="Gene3D" id="1.10.30.10">
    <property type="entry name" value="High mobility group box domain"/>
    <property type="match status" value="1"/>
</dbReference>
<dbReference type="InterPro" id="IPR009071">
    <property type="entry name" value="HMG_box_dom"/>
</dbReference>
<dbReference type="InterPro" id="IPR036910">
    <property type="entry name" value="HMG_box_dom_sf"/>
</dbReference>
<dbReference type="InterPro" id="IPR031061">
    <property type="entry name" value="HMGB_plant"/>
</dbReference>
<dbReference type="PANTHER" id="PTHR46261:SF30">
    <property type="entry name" value="DNA-BINDING PROTEIN"/>
    <property type="match status" value="1"/>
</dbReference>
<dbReference type="PANTHER" id="PTHR46261">
    <property type="entry name" value="HIGH MOBILITY GROUP B PROTEIN 4-RELATED"/>
    <property type="match status" value="1"/>
</dbReference>
<dbReference type="Pfam" id="PF00505">
    <property type="entry name" value="HMG_box"/>
    <property type="match status" value="1"/>
</dbReference>
<dbReference type="SMART" id="SM00398">
    <property type="entry name" value="HMG"/>
    <property type="match status" value="1"/>
</dbReference>
<dbReference type="SUPFAM" id="SSF47095">
    <property type="entry name" value="HMG-box"/>
    <property type="match status" value="1"/>
</dbReference>
<dbReference type="PROSITE" id="PS50118">
    <property type="entry name" value="HMG_BOX_2"/>
    <property type="match status" value="1"/>
</dbReference>
<sequence length="144" mass="16057">MKGGKSKAKSDNKLAVKKQAADTKKTKKAVKDPNKPKRPPSAFFVFMEDFRKTYKEKHPNNKSVAVVGKAGGDKWKQLTAAEKAPFISKAEKRKQEYEKNLQAYNKKQAAGAAEEEESDKSRSEVNDDDEDQDGSGEDDSEDDD</sequence>
<keyword id="KW-0238">DNA-binding</keyword>
<keyword id="KW-0539">Nucleus</keyword>